<sequence length="197" mass="22401">MKQFIDFIPLLLFFIVYKLDPRPMEVAGHHFEFGGIYSATAMLIISSLVVYGALFLRQRKLEKGQWLTLIACLVFGGLTLTFHSETFLKWKAPVVNWLFALGFAGSHFIGDRVLIKRIMGHALTLPDAIWTRLNLAWIAFFLFCGAANLFVAFTFQDFWVDFKVFGSLGMTVIFLVAQGVYLSRHLHDDPSTSKPKD</sequence>
<comment type="function">
    <text evidence="1">Plays a role in cell envelope biogenesis, maintenance of cell envelope integrity and membrane homeostasis.</text>
</comment>
<comment type="subcellular location">
    <subcellularLocation>
        <location evidence="1">Cell inner membrane</location>
        <topology evidence="1">Multi-pass membrane protein</topology>
    </subcellularLocation>
</comment>
<comment type="similarity">
    <text evidence="1">Belongs to the YciB family.</text>
</comment>
<dbReference type="EMBL" id="AE015451">
    <property type="protein sequence ID" value="AAN70075.1"/>
    <property type="molecule type" value="Genomic_DNA"/>
</dbReference>
<dbReference type="RefSeq" id="NP_746611.1">
    <property type="nucleotide sequence ID" value="NC_002947.4"/>
</dbReference>
<dbReference type="RefSeq" id="WP_010955188.1">
    <property type="nucleotide sequence ID" value="NZ_CP169744.1"/>
</dbReference>
<dbReference type="SMR" id="P59364"/>
<dbReference type="STRING" id="160488.PP_4501"/>
<dbReference type="PaxDb" id="160488-PP_4501"/>
<dbReference type="KEGG" id="ppu:PP_4501"/>
<dbReference type="PATRIC" id="fig|160488.4.peg.4792"/>
<dbReference type="eggNOG" id="COG2917">
    <property type="taxonomic scope" value="Bacteria"/>
</dbReference>
<dbReference type="HOGENOM" id="CLU_089554_2_0_6"/>
<dbReference type="OrthoDB" id="9788219at2"/>
<dbReference type="PhylomeDB" id="P59364"/>
<dbReference type="BioCyc" id="PPUT160488:G1G01-4804-MONOMER"/>
<dbReference type="Proteomes" id="UP000000556">
    <property type="component" value="Chromosome"/>
</dbReference>
<dbReference type="GO" id="GO:0005886">
    <property type="term" value="C:plasma membrane"/>
    <property type="evidence" value="ECO:0007669"/>
    <property type="project" value="UniProtKB-SubCell"/>
</dbReference>
<dbReference type="HAMAP" id="MF_00189">
    <property type="entry name" value="YciB"/>
    <property type="match status" value="1"/>
</dbReference>
<dbReference type="InterPro" id="IPR006008">
    <property type="entry name" value="YciB"/>
</dbReference>
<dbReference type="NCBIfam" id="TIGR00997">
    <property type="entry name" value="ispZ"/>
    <property type="match status" value="1"/>
</dbReference>
<dbReference type="NCBIfam" id="NF001325">
    <property type="entry name" value="PRK00259.1-3"/>
    <property type="match status" value="1"/>
</dbReference>
<dbReference type="NCBIfam" id="NF001327">
    <property type="entry name" value="PRK00259.1-5"/>
    <property type="match status" value="1"/>
</dbReference>
<dbReference type="PANTHER" id="PTHR36917:SF1">
    <property type="entry name" value="INNER MEMBRANE-SPANNING PROTEIN YCIB"/>
    <property type="match status" value="1"/>
</dbReference>
<dbReference type="PANTHER" id="PTHR36917">
    <property type="entry name" value="INTRACELLULAR SEPTATION PROTEIN A-RELATED"/>
    <property type="match status" value="1"/>
</dbReference>
<dbReference type="Pfam" id="PF04279">
    <property type="entry name" value="IspA"/>
    <property type="match status" value="1"/>
</dbReference>
<gene>
    <name evidence="1" type="primary">yciB</name>
    <name type="ordered locus">PP_4501</name>
</gene>
<name>YCIB_PSEPK</name>
<reference key="1">
    <citation type="journal article" date="2002" name="Environ. Microbiol.">
        <title>Complete genome sequence and comparative analysis of the metabolically versatile Pseudomonas putida KT2440.</title>
        <authorList>
            <person name="Nelson K.E."/>
            <person name="Weinel C."/>
            <person name="Paulsen I.T."/>
            <person name="Dodson R.J."/>
            <person name="Hilbert H."/>
            <person name="Martins dos Santos V.A.P."/>
            <person name="Fouts D.E."/>
            <person name="Gill S.R."/>
            <person name="Pop M."/>
            <person name="Holmes M."/>
            <person name="Brinkac L.M."/>
            <person name="Beanan M.J."/>
            <person name="DeBoy R.T."/>
            <person name="Daugherty S.C."/>
            <person name="Kolonay J.F."/>
            <person name="Madupu R."/>
            <person name="Nelson W.C."/>
            <person name="White O."/>
            <person name="Peterson J.D."/>
            <person name="Khouri H.M."/>
            <person name="Hance I."/>
            <person name="Chris Lee P."/>
            <person name="Holtzapple E.K."/>
            <person name="Scanlan D."/>
            <person name="Tran K."/>
            <person name="Moazzez A."/>
            <person name="Utterback T.R."/>
            <person name="Rizzo M."/>
            <person name="Lee K."/>
            <person name="Kosack D."/>
            <person name="Moestl D."/>
            <person name="Wedler H."/>
            <person name="Lauber J."/>
            <person name="Stjepandic D."/>
            <person name="Hoheisel J."/>
            <person name="Straetz M."/>
            <person name="Heim S."/>
            <person name="Kiewitz C."/>
            <person name="Eisen J.A."/>
            <person name="Timmis K.N."/>
            <person name="Duesterhoeft A."/>
            <person name="Tuemmler B."/>
            <person name="Fraser C.M."/>
        </authorList>
    </citation>
    <scope>NUCLEOTIDE SEQUENCE [LARGE SCALE GENOMIC DNA]</scope>
    <source>
        <strain>ATCC 47054 / DSM 6125 / CFBP 8728 / NCIMB 11950 / KT2440</strain>
    </source>
</reference>
<evidence type="ECO:0000255" key="1">
    <source>
        <dbReference type="HAMAP-Rule" id="MF_00189"/>
    </source>
</evidence>
<protein>
    <recommendedName>
        <fullName evidence="1">Inner membrane-spanning protein YciB</fullName>
    </recommendedName>
</protein>
<accession>P59364</accession>
<organism>
    <name type="scientific">Pseudomonas putida (strain ATCC 47054 / DSM 6125 / CFBP 8728 / NCIMB 11950 / KT2440)</name>
    <dbReference type="NCBI Taxonomy" id="160488"/>
    <lineage>
        <taxon>Bacteria</taxon>
        <taxon>Pseudomonadati</taxon>
        <taxon>Pseudomonadota</taxon>
        <taxon>Gammaproteobacteria</taxon>
        <taxon>Pseudomonadales</taxon>
        <taxon>Pseudomonadaceae</taxon>
        <taxon>Pseudomonas</taxon>
    </lineage>
</organism>
<keyword id="KW-0997">Cell inner membrane</keyword>
<keyword id="KW-1003">Cell membrane</keyword>
<keyword id="KW-0472">Membrane</keyword>
<keyword id="KW-1185">Reference proteome</keyword>
<keyword id="KW-0812">Transmembrane</keyword>
<keyword id="KW-1133">Transmembrane helix</keyword>
<proteinExistence type="inferred from homology"/>
<feature type="chain" id="PRO_0000206540" description="Inner membrane-spanning protein YciB">
    <location>
        <begin position="1"/>
        <end position="197"/>
    </location>
</feature>
<feature type="transmembrane region" description="Helical" evidence="1">
    <location>
        <begin position="36"/>
        <end position="56"/>
    </location>
</feature>
<feature type="transmembrane region" description="Helical" evidence="1">
    <location>
        <begin position="64"/>
        <end position="84"/>
    </location>
</feature>
<feature type="transmembrane region" description="Helical" evidence="1">
    <location>
        <begin position="90"/>
        <end position="110"/>
    </location>
</feature>
<feature type="transmembrane region" description="Helical" evidence="1">
    <location>
        <begin position="135"/>
        <end position="155"/>
    </location>
</feature>
<feature type="transmembrane region" description="Helical" evidence="1">
    <location>
        <begin position="162"/>
        <end position="182"/>
    </location>
</feature>